<name>CA17_CONLE</name>
<organism>
    <name type="scientific">Conus leopardus</name>
    <name type="common">Leopard cone</name>
    <dbReference type="NCBI Taxonomy" id="101306"/>
    <lineage>
        <taxon>Eukaryota</taxon>
        <taxon>Metazoa</taxon>
        <taxon>Spiralia</taxon>
        <taxon>Lophotrochozoa</taxon>
        <taxon>Mollusca</taxon>
        <taxon>Gastropoda</taxon>
        <taxon>Caenogastropoda</taxon>
        <taxon>Neogastropoda</taxon>
        <taxon>Conoidea</taxon>
        <taxon>Conidae</taxon>
        <taxon>Conus</taxon>
        <taxon>Lithoconus</taxon>
    </lineage>
</organism>
<evidence type="ECO:0000250" key="1">
    <source>
        <dbReference type="UniProtKB" id="P56636"/>
    </source>
</evidence>
<evidence type="ECO:0000250" key="2">
    <source>
        <dbReference type="UniProtKB" id="Q2I2R8"/>
    </source>
</evidence>
<evidence type="ECO:0000255" key="3"/>
<evidence type="ECO:0000303" key="4">
    <source>
    </source>
</evidence>
<evidence type="ECO:0000305" key="5"/>
<evidence type="ECO:0000305" key="6">
    <source>
    </source>
</evidence>
<evidence type="ECO:0000312" key="7">
    <source>
        <dbReference type="EMBL" id="ABD33855.1"/>
    </source>
</evidence>
<dbReference type="EMBL" id="DQ311063">
    <property type="protein sequence ID" value="ABD33855.1"/>
    <property type="molecule type" value="mRNA"/>
</dbReference>
<dbReference type="ConoServer" id="553">
    <property type="toxin name" value="Lp1.7 precursor"/>
</dbReference>
<dbReference type="GO" id="GO:0005576">
    <property type="term" value="C:extracellular region"/>
    <property type="evidence" value="ECO:0007669"/>
    <property type="project" value="UniProtKB-SubCell"/>
</dbReference>
<dbReference type="GO" id="GO:0035792">
    <property type="term" value="C:host cell postsynaptic membrane"/>
    <property type="evidence" value="ECO:0007669"/>
    <property type="project" value="UniProtKB-KW"/>
</dbReference>
<dbReference type="GO" id="GO:0030550">
    <property type="term" value="F:acetylcholine receptor inhibitor activity"/>
    <property type="evidence" value="ECO:0007669"/>
    <property type="project" value="UniProtKB-KW"/>
</dbReference>
<dbReference type="GO" id="GO:0099106">
    <property type="term" value="F:ion channel regulator activity"/>
    <property type="evidence" value="ECO:0007669"/>
    <property type="project" value="UniProtKB-KW"/>
</dbReference>
<dbReference type="GO" id="GO:0090729">
    <property type="term" value="F:toxin activity"/>
    <property type="evidence" value="ECO:0007669"/>
    <property type="project" value="UniProtKB-KW"/>
</dbReference>
<dbReference type="InterPro" id="IPR009958">
    <property type="entry name" value="Conotoxin_a-typ"/>
</dbReference>
<dbReference type="Pfam" id="PF07365">
    <property type="entry name" value="Toxin_8"/>
    <property type="match status" value="1"/>
</dbReference>
<reference key="1">
    <citation type="journal article" date="2007" name="Toxicon">
        <title>From the identification of gene organization of alpha conotoxins to the cloning of novel toxins.</title>
        <authorList>
            <person name="Yuan D.-D."/>
            <person name="Han Y.-H."/>
            <person name="Wang C.-G."/>
            <person name="Chi C.-W."/>
        </authorList>
    </citation>
    <scope>NUCLEOTIDE SEQUENCE [MRNA]</scope>
    <source>
        <tissue>Venom duct</tissue>
    </source>
</reference>
<proteinExistence type="inferred from homology"/>
<accession>A1X8C3</accession>
<feature type="signal peptide" evidence="3">
    <location>
        <begin position="1"/>
        <end position="21"/>
    </location>
</feature>
<feature type="propeptide" id="PRO_0000370655" evidence="6">
    <location>
        <begin position="22"/>
        <end position="41"/>
    </location>
</feature>
<feature type="peptide" id="PRO_0000370656" description="Alpha-conotoxin-like Lp1.7" evidence="6">
    <location>
        <begin position="42"/>
        <end position="64"/>
    </location>
</feature>
<feature type="region of interest" description="Lacks the Ser-Xaa-Pro motif that is crucial for potent interaction with nAChR" evidence="5">
    <location>
        <begin position="49"/>
        <end position="51"/>
    </location>
</feature>
<feature type="disulfide bond" evidence="1">
    <location>
        <begin position="47"/>
        <end position="53"/>
    </location>
</feature>
<feature type="disulfide bond" evidence="1">
    <location>
        <begin position="48"/>
        <end position="61"/>
    </location>
</feature>
<keyword id="KW-0008">Acetylcholine receptor inhibiting toxin</keyword>
<keyword id="KW-1015">Disulfide bond</keyword>
<keyword id="KW-0872">Ion channel impairing toxin</keyword>
<keyword id="KW-0528">Neurotoxin</keyword>
<keyword id="KW-0629">Postsynaptic neurotoxin</keyword>
<keyword id="KW-0964">Secreted</keyword>
<keyword id="KW-0732">Signal</keyword>
<keyword id="KW-0800">Toxin</keyword>
<protein>
    <recommendedName>
        <fullName evidence="4">Alpha-conotoxin-like Lp1.7</fullName>
    </recommendedName>
    <alternativeName>
        <fullName evidence="7">Alpha-conotoxin-like Lp1.8</fullName>
    </alternativeName>
</protein>
<sequence length="64" mass="7473">MGMRMMFTMFLLVVLTTTVVSFNSDRESNHENRRTSNQITRGMWDECCDDPPCRQNNMEHCPAS</sequence>
<comment type="function">
    <text evidence="2">Alpha-conotoxins act on postsynaptic membranes, they bind to the nicotinic acetylcholine receptors (nAChR) and thus inhibit them (By similarity). Has possibly a distinct nAChR binding mode from other alpha-conotoxins, due to a different three residue motif (lacks the Ser-Xaa-Pro motif) (By similarity).</text>
</comment>
<comment type="subcellular location">
    <subcellularLocation>
        <location evidence="6">Secreted</location>
    </subcellularLocation>
</comment>
<comment type="tissue specificity">
    <text evidence="6">Expressed by the venom duct.</text>
</comment>
<comment type="domain">
    <text evidence="5">The cysteine framework is I (CC-C-C). Alpha4/7 pattern.</text>
</comment>
<comment type="similarity">
    <text evidence="5">Belongs to the conotoxin A superfamily.</text>
</comment>
<comment type="caution">
    <text evidence="6">There is a discrepancy in nomenclature: was submitted as Lp1.8 but is named Lp1.7 in PubMed:17400270.</text>
</comment>